<reference key="1">
    <citation type="journal article" date="2009" name="Nature">
        <title>Evolution of pathogenicity and sexual reproduction in eight Candida genomes.</title>
        <authorList>
            <person name="Butler G."/>
            <person name="Rasmussen M.D."/>
            <person name="Lin M.F."/>
            <person name="Santos M.A.S."/>
            <person name="Sakthikumar S."/>
            <person name="Munro C.A."/>
            <person name="Rheinbay E."/>
            <person name="Grabherr M."/>
            <person name="Forche A."/>
            <person name="Reedy J.L."/>
            <person name="Agrafioti I."/>
            <person name="Arnaud M.B."/>
            <person name="Bates S."/>
            <person name="Brown A.J.P."/>
            <person name="Brunke S."/>
            <person name="Costanzo M.C."/>
            <person name="Fitzpatrick D.A."/>
            <person name="de Groot P.W.J."/>
            <person name="Harris D."/>
            <person name="Hoyer L.L."/>
            <person name="Hube B."/>
            <person name="Klis F.M."/>
            <person name="Kodira C."/>
            <person name="Lennard N."/>
            <person name="Logue M.E."/>
            <person name="Martin R."/>
            <person name="Neiman A.M."/>
            <person name="Nikolaou E."/>
            <person name="Quail M.A."/>
            <person name="Quinn J."/>
            <person name="Santos M.C."/>
            <person name="Schmitzberger F.F."/>
            <person name="Sherlock G."/>
            <person name="Shah P."/>
            <person name="Silverstein K.A.T."/>
            <person name="Skrzypek M.S."/>
            <person name="Soll D."/>
            <person name="Staggs R."/>
            <person name="Stansfield I."/>
            <person name="Stumpf M.P.H."/>
            <person name="Sudbery P.E."/>
            <person name="Srikantha T."/>
            <person name="Zeng Q."/>
            <person name="Berman J."/>
            <person name="Berriman M."/>
            <person name="Heitman J."/>
            <person name="Gow N.A.R."/>
            <person name="Lorenz M.C."/>
            <person name="Birren B.W."/>
            <person name="Kellis M."/>
            <person name="Cuomo C.A."/>
        </authorList>
    </citation>
    <scope>NUCLEOTIDE SEQUENCE [LARGE SCALE GENOMIC DNA]</scope>
    <source>
        <strain>WO-1</strain>
    </source>
</reference>
<protein>
    <recommendedName>
        <fullName>Altered inheritance of mitochondria protein 24, mitochondrial</fullName>
    </recommendedName>
</protein>
<keyword id="KW-0496">Mitochondrion</keyword>
<keyword id="KW-0809">Transit peptide</keyword>
<comment type="subcellular location">
    <subcellularLocation>
        <location evidence="1">Mitochondrion</location>
    </subcellularLocation>
</comment>
<comment type="similarity">
    <text evidence="3">Belongs to the AIM24 family.</text>
</comment>
<evidence type="ECO:0000250" key="1"/>
<evidence type="ECO:0000255" key="2"/>
<evidence type="ECO:0000305" key="3"/>
<proteinExistence type="inferred from homology"/>
<feature type="transit peptide" description="Mitochondrion" evidence="2">
    <location>
        <begin position="1"/>
        <end position="30"/>
    </location>
</feature>
<feature type="chain" id="PRO_0000399570" description="Altered inheritance of mitochondria protein 24, mitochondrial">
    <location>
        <begin position="31"/>
        <end position="475"/>
    </location>
</feature>
<name>AIM24_CANAW</name>
<sequence>MSLNQYIRPVRTKLSHISFIRNISITQSSINTTIKNDESISKTTTIPENIQQAKELAGYRALEIPEFKTLGSAEGTTATATGSSSILSINVPPSVPVYIRRGSLLSIYGIQEISSIDSVRSQLQFPNFWKRLIYGGYVSGYQKLISTTPFSLLISSKSRSSGSGSGSGFEKSFVNLVLDGTTDWAILDKSALQVYTGNSLSITMHKLPKFISKKLSRSLKKDKKSKTNTNKLETGLFSWKKLGYTLLSGRGKVGLVGNGSSSGYGSSIYNINLNQNEEILINKNNLLGITVNGPYDLQNCIVKYEFPIINNANPTNTNTNINIKEPVTIVKPKLIQPTTWNLIVLKLKNFNNGFKKIFQIINKYTLGLKTTSYNYLAGNQDFIKVIGPRNLLLQSNTNKSHRGFYNIIPRNKPQAKVWPTNQTTTKVDESSSFSTPKDYLNYVTIEPGKGAVFKSTLDFSETVESIENKNKNKNK</sequence>
<dbReference type="EMBL" id="CM000310">
    <property type="protein sequence ID" value="EEQ44189.1"/>
    <property type="molecule type" value="Genomic_DNA"/>
</dbReference>
<dbReference type="PaxDb" id="5476-C4YPQ0"/>
<dbReference type="VEuPathDB" id="FungiDB:CAWG_02451"/>
<dbReference type="HOGENOM" id="CLU_040665_0_0_1"/>
<dbReference type="OMA" id="NGPYDLQ"/>
<dbReference type="OrthoDB" id="25919at766764"/>
<dbReference type="Proteomes" id="UP000001429">
    <property type="component" value="Chromosome 3"/>
</dbReference>
<dbReference type="GO" id="GO:0005743">
    <property type="term" value="C:mitochondrial inner membrane"/>
    <property type="evidence" value="ECO:0007669"/>
    <property type="project" value="TreeGrafter"/>
</dbReference>
<dbReference type="GO" id="GO:0007007">
    <property type="term" value="P:inner mitochondrial membrane organization"/>
    <property type="evidence" value="ECO:0007669"/>
    <property type="project" value="TreeGrafter"/>
</dbReference>
<dbReference type="Gene3D" id="3.60.160.10">
    <property type="entry name" value="Mitochondrial biogenesis AIM24"/>
    <property type="match status" value="1"/>
</dbReference>
<dbReference type="InterPro" id="IPR002838">
    <property type="entry name" value="AIM24"/>
</dbReference>
<dbReference type="InterPro" id="IPR036983">
    <property type="entry name" value="AIM24_sf"/>
</dbReference>
<dbReference type="PANTHER" id="PTHR36959">
    <property type="entry name" value="ALTERED INHERITANCE OF MITOCHONDRIA PROTEIN 24, MITOCHONDRIAL"/>
    <property type="match status" value="1"/>
</dbReference>
<dbReference type="PANTHER" id="PTHR36959:SF2">
    <property type="entry name" value="ALTERED INHERITANCE OF MITOCHONDRIA PROTEIN 24, MITOCHONDRIAL"/>
    <property type="match status" value="1"/>
</dbReference>
<dbReference type="Pfam" id="PF01987">
    <property type="entry name" value="AIM24"/>
    <property type="match status" value="1"/>
</dbReference>
<accession>C4YPQ0</accession>
<gene>
    <name type="primary">AIM24</name>
    <name type="ORF">CAWG_02451</name>
</gene>
<organism>
    <name type="scientific">Candida albicans (strain WO-1)</name>
    <name type="common">Yeast</name>
    <dbReference type="NCBI Taxonomy" id="294748"/>
    <lineage>
        <taxon>Eukaryota</taxon>
        <taxon>Fungi</taxon>
        <taxon>Dikarya</taxon>
        <taxon>Ascomycota</taxon>
        <taxon>Saccharomycotina</taxon>
        <taxon>Pichiomycetes</taxon>
        <taxon>Debaryomycetaceae</taxon>
        <taxon>Candida/Lodderomyces clade</taxon>
        <taxon>Candida</taxon>
    </lineage>
</organism>